<keyword id="KW-1185">Reference proteome</keyword>
<keyword id="KW-0687">Ribonucleoprotein</keyword>
<keyword id="KW-0689">Ribosomal protein</keyword>
<proteinExistence type="inferred from homology"/>
<accession>Q5F5S5</accession>
<protein>
    <recommendedName>
        <fullName evidence="1">Small ribosomal subunit protein uS10</fullName>
    </recommendedName>
    <alternativeName>
        <fullName evidence="2">30S ribosomal protein S10</fullName>
    </alternativeName>
</protein>
<organism>
    <name type="scientific">Neisseria gonorrhoeae (strain ATCC 700825 / FA 1090)</name>
    <dbReference type="NCBI Taxonomy" id="242231"/>
    <lineage>
        <taxon>Bacteria</taxon>
        <taxon>Pseudomonadati</taxon>
        <taxon>Pseudomonadota</taxon>
        <taxon>Betaproteobacteria</taxon>
        <taxon>Neisseriales</taxon>
        <taxon>Neisseriaceae</taxon>
        <taxon>Neisseria</taxon>
    </lineage>
</organism>
<gene>
    <name evidence="1" type="primary">rpsJ</name>
    <name type="ordered locus">NGO_1841</name>
</gene>
<name>RS10_NEIG1</name>
<comment type="function">
    <text evidence="1">Involved in the binding of tRNA to the ribosomes.</text>
</comment>
<comment type="subunit">
    <text evidence="1">Part of the 30S ribosomal subunit.</text>
</comment>
<comment type="similarity">
    <text evidence="1">Belongs to the universal ribosomal protein uS10 family.</text>
</comment>
<evidence type="ECO:0000255" key="1">
    <source>
        <dbReference type="HAMAP-Rule" id="MF_00508"/>
    </source>
</evidence>
<evidence type="ECO:0000305" key="2"/>
<sequence>MANQKIRIRLKAYDYALIDRSAQEIVETAKRTGAVVKGPIPLPTKIERFNILRSPHVNKTSREQLEIRTHLRLMDIVDWTDKTTDALMKLDLPAGVDVEIKVQ</sequence>
<reference key="1">
    <citation type="submission" date="2003-03" db="EMBL/GenBank/DDBJ databases">
        <title>The complete genome sequence of Neisseria gonorrhoeae.</title>
        <authorList>
            <person name="Lewis L.A."/>
            <person name="Gillaspy A.F."/>
            <person name="McLaughlin R.E."/>
            <person name="Gipson M."/>
            <person name="Ducey T.F."/>
            <person name="Ownbey T."/>
            <person name="Hartman K."/>
            <person name="Nydick C."/>
            <person name="Carson M.B."/>
            <person name="Vaughn J."/>
            <person name="Thomson C."/>
            <person name="Song L."/>
            <person name="Lin S."/>
            <person name="Yuan X."/>
            <person name="Najar F."/>
            <person name="Zhan M."/>
            <person name="Ren Q."/>
            <person name="Zhu H."/>
            <person name="Qi S."/>
            <person name="Kenton S.M."/>
            <person name="Lai H."/>
            <person name="White J.D."/>
            <person name="Clifton S."/>
            <person name="Roe B.A."/>
            <person name="Dyer D.W."/>
        </authorList>
    </citation>
    <scope>NUCLEOTIDE SEQUENCE [LARGE SCALE GENOMIC DNA]</scope>
    <source>
        <strain>ATCC 700825 / FA 1090</strain>
    </source>
</reference>
<dbReference type="EMBL" id="AE004969">
    <property type="protein sequence ID" value="AAW90462.1"/>
    <property type="molecule type" value="Genomic_DNA"/>
</dbReference>
<dbReference type="RefSeq" id="WP_002215394.1">
    <property type="nucleotide sequence ID" value="NC_002946.2"/>
</dbReference>
<dbReference type="RefSeq" id="YP_208874.1">
    <property type="nucleotide sequence ID" value="NC_002946.2"/>
</dbReference>
<dbReference type="SMR" id="Q5F5S5"/>
<dbReference type="STRING" id="242231.NGO_1841"/>
<dbReference type="GeneID" id="93387214"/>
<dbReference type="KEGG" id="ngo:NGO_1841"/>
<dbReference type="PATRIC" id="fig|242231.10.peg.2213"/>
<dbReference type="HOGENOM" id="CLU_122625_1_3_4"/>
<dbReference type="Proteomes" id="UP000000535">
    <property type="component" value="Chromosome"/>
</dbReference>
<dbReference type="GO" id="GO:1990904">
    <property type="term" value="C:ribonucleoprotein complex"/>
    <property type="evidence" value="ECO:0007669"/>
    <property type="project" value="UniProtKB-KW"/>
</dbReference>
<dbReference type="GO" id="GO:0005840">
    <property type="term" value="C:ribosome"/>
    <property type="evidence" value="ECO:0007669"/>
    <property type="project" value="UniProtKB-KW"/>
</dbReference>
<dbReference type="GO" id="GO:0003735">
    <property type="term" value="F:structural constituent of ribosome"/>
    <property type="evidence" value="ECO:0007669"/>
    <property type="project" value="InterPro"/>
</dbReference>
<dbReference type="GO" id="GO:0000049">
    <property type="term" value="F:tRNA binding"/>
    <property type="evidence" value="ECO:0007669"/>
    <property type="project" value="UniProtKB-UniRule"/>
</dbReference>
<dbReference type="GO" id="GO:0006412">
    <property type="term" value="P:translation"/>
    <property type="evidence" value="ECO:0007669"/>
    <property type="project" value="UniProtKB-UniRule"/>
</dbReference>
<dbReference type="FunFam" id="3.30.70.600:FF:000001">
    <property type="entry name" value="30S ribosomal protein S10"/>
    <property type="match status" value="1"/>
</dbReference>
<dbReference type="Gene3D" id="3.30.70.600">
    <property type="entry name" value="Ribosomal protein S10 domain"/>
    <property type="match status" value="1"/>
</dbReference>
<dbReference type="HAMAP" id="MF_00508">
    <property type="entry name" value="Ribosomal_uS10"/>
    <property type="match status" value="1"/>
</dbReference>
<dbReference type="InterPro" id="IPR001848">
    <property type="entry name" value="Ribosomal_uS10"/>
</dbReference>
<dbReference type="InterPro" id="IPR018268">
    <property type="entry name" value="Ribosomal_uS10_CS"/>
</dbReference>
<dbReference type="InterPro" id="IPR027486">
    <property type="entry name" value="Ribosomal_uS10_dom"/>
</dbReference>
<dbReference type="InterPro" id="IPR036838">
    <property type="entry name" value="Ribosomal_uS10_dom_sf"/>
</dbReference>
<dbReference type="NCBIfam" id="NF001861">
    <property type="entry name" value="PRK00596.1"/>
    <property type="match status" value="1"/>
</dbReference>
<dbReference type="NCBIfam" id="TIGR01049">
    <property type="entry name" value="rpsJ_bact"/>
    <property type="match status" value="1"/>
</dbReference>
<dbReference type="PANTHER" id="PTHR11700">
    <property type="entry name" value="30S RIBOSOMAL PROTEIN S10 FAMILY MEMBER"/>
    <property type="match status" value="1"/>
</dbReference>
<dbReference type="Pfam" id="PF00338">
    <property type="entry name" value="Ribosomal_S10"/>
    <property type="match status" value="1"/>
</dbReference>
<dbReference type="PRINTS" id="PR00971">
    <property type="entry name" value="RIBOSOMALS10"/>
</dbReference>
<dbReference type="SMART" id="SM01403">
    <property type="entry name" value="Ribosomal_S10"/>
    <property type="match status" value="1"/>
</dbReference>
<dbReference type="SUPFAM" id="SSF54999">
    <property type="entry name" value="Ribosomal protein S10"/>
    <property type="match status" value="1"/>
</dbReference>
<dbReference type="PROSITE" id="PS00361">
    <property type="entry name" value="RIBOSOMAL_S10"/>
    <property type="match status" value="1"/>
</dbReference>
<feature type="chain" id="PRO_0000237067" description="Small ribosomal subunit protein uS10">
    <location>
        <begin position="1"/>
        <end position="103"/>
    </location>
</feature>